<name>CITE4_HUMAN</name>
<organism>
    <name type="scientific">Homo sapiens</name>
    <name type="common">Human</name>
    <dbReference type="NCBI Taxonomy" id="9606"/>
    <lineage>
        <taxon>Eukaryota</taxon>
        <taxon>Metazoa</taxon>
        <taxon>Chordata</taxon>
        <taxon>Craniata</taxon>
        <taxon>Vertebrata</taxon>
        <taxon>Euteleostomi</taxon>
        <taxon>Mammalia</taxon>
        <taxon>Eutheria</taxon>
        <taxon>Euarchontoglires</taxon>
        <taxon>Primates</taxon>
        <taxon>Haplorrhini</taxon>
        <taxon>Catarrhini</taxon>
        <taxon>Hominidae</taxon>
        <taxon>Homo</taxon>
    </lineage>
</organism>
<evidence type="ECO:0000255" key="1"/>
<evidence type="ECO:0000256" key="2">
    <source>
        <dbReference type="SAM" id="MobiDB-lite"/>
    </source>
</evidence>
<evidence type="ECO:0000269" key="3">
    <source>
    </source>
</evidence>
<evidence type="ECO:0000269" key="4">
    <source>
    </source>
</evidence>
<evidence type="ECO:0000305" key="5"/>
<evidence type="ECO:0000312" key="6">
    <source>
        <dbReference type="EMBL" id="AAH35496.1"/>
    </source>
</evidence>
<evidence type="ECO:0000312" key="7">
    <source>
        <dbReference type="EMBL" id="AAK64235.1"/>
    </source>
</evidence>
<evidence type="ECO:0000312" key="8">
    <source>
        <dbReference type="EMBL" id="AAL73989.1"/>
    </source>
</evidence>
<evidence type="ECO:0000312" key="9">
    <source>
        <dbReference type="HGNC" id="HGNC:18696"/>
    </source>
</evidence>
<dbReference type="EMBL" id="AF362074">
    <property type="protein sequence ID" value="AAK64235.1"/>
    <property type="molecule type" value="Genomic_DNA"/>
</dbReference>
<dbReference type="EMBL" id="AF466291">
    <property type="protein sequence ID" value="AAL73989.1"/>
    <property type="molecule type" value="Genomic_DNA"/>
</dbReference>
<dbReference type="EMBL" id="BC052559">
    <property type="protein sequence ID" value="AAH52559.1"/>
    <property type="molecule type" value="mRNA"/>
</dbReference>
<dbReference type="EMBL" id="BC035496">
    <property type="protein sequence ID" value="AAH35496.1"/>
    <property type="molecule type" value="mRNA"/>
</dbReference>
<dbReference type="CCDS" id="CCDS458.1"/>
<dbReference type="RefSeq" id="NP_597724.1">
    <property type="nucleotide sequence ID" value="NM_133467.3"/>
</dbReference>
<dbReference type="BioGRID" id="127875">
    <property type="interactions" value="5"/>
</dbReference>
<dbReference type="FunCoup" id="Q96RK1">
    <property type="interactions" value="255"/>
</dbReference>
<dbReference type="STRING" id="9606.ENSP00000361721"/>
<dbReference type="BioMuta" id="CITED4"/>
<dbReference type="DMDM" id="74732696"/>
<dbReference type="jPOST" id="Q96RK1"/>
<dbReference type="MassIVE" id="Q96RK1"/>
<dbReference type="PaxDb" id="9606-ENSP00000361721"/>
<dbReference type="PeptideAtlas" id="Q96RK1"/>
<dbReference type="ProteomicsDB" id="77974"/>
<dbReference type="TopDownProteomics" id="Q96RK1"/>
<dbReference type="Antibodypedia" id="32148">
    <property type="antibodies" value="145 antibodies from 23 providers"/>
</dbReference>
<dbReference type="DNASU" id="163732"/>
<dbReference type="Ensembl" id="ENST00000372638.4">
    <property type="protein sequence ID" value="ENSP00000361721.2"/>
    <property type="gene ID" value="ENSG00000179862.7"/>
</dbReference>
<dbReference type="GeneID" id="163732"/>
<dbReference type="KEGG" id="hsa:163732"/>
<dbReference type="MANE-Select" id="ENST00000372638.4">
    <property type="protein sequence ID" value="ENSP00000361721.2"/>
    <property type="RefSeq nucleotide sequence ID" value="NM_133467.3"/>
    <property type="RefSeq protein sequence ID" value="NP_597724.1"/>
</dbReference>
<dbReference type="UCSC" id="uc001cgj.4">
    <property type="organism name" value="human"/>
</dbReference>
<dbReference type="AGR" id="HGNC:18696"/>
<dbReference type="CTD" id="163732"/>
<dbReference type="DisGeNET" id="163732"/>
<dbReference type="GeneCards" id="CITED4"/>
<dbReference type="HGNC" id="HGNC:18696">
    <property type="gene designation" value="CITED4"/>
</dbReference>
<dbReference type="HPA" id="ENSG00000179862">
    <property type="expression patterns" value="Low tissue specificity"/>
</dbReference>
<dbReference type="MIM" id="606815">
    <property type="type" value="gene"/>
</dbReference>
<dbReference type="neXtProt" id="NX_Q96RK1"/>
<dbReference type="OpenTargets" id="ENSG00000179862"/>
<dbReference type="PharmGKB" id="PA38643"/>
<dbReference type="VEuPathDB" id="HostDB:ENSG00000179862"/>
<dbReference type="eggNOG" id="ENOG502QQEE">
    <property type="taxonomic scope" value="Eukaryota"/>
</dbReference>
<dbReference type="GeneTree" id="ENSGT00530000063624"/>
<dbReference type="HOGENOM" id="CLU_128809_0_0_1"/>
<dbReference type="InParanoid" id="Q96RK1"/>
<dbReference type="OMA" id="GYHLVQR"/>
<dbReference type="OrthoDB" id="8939897at2759"/>
<dbReference type="PAN-GO" id="Q96RK1">
    <property type="GO annotations" value="2 GO annotations based on evolutionary models"/>
</dbReference>
<dbReference type="PhylomeDB" id="Q96RK1"/>
<dbReference type="TreeFam" id="TF331915"/>
<dbReference type="PathwayCommons" id="Q96RK1"/>
<dbReference type="Reactome" id="R-HSA-8866907">
    <property type="pathway name" value="Activation of the TFAP2 (AP-2) family of transcription factors"/>
</dbReference>
<dbReference type="SignaLink" id="Q96RK1"/>
<dbReference type="BioGRID-ORCS" id="163732">
    <property type="hits" value="17 hits in 1140 CRISPR screens"/>
</dbReference>
<dbReference type="ChiTaRS" id="CITED4">
    <property type="organism name" value="human"/>
</dbReference>
<dbReference type="GenomeRNAi" id="163732"/>
<dbReference type="Pharos" id="Q96RK1">
    <property type="development level" value="Tbio"/>
</dbReference>
<dbReference type="PRO" id="PR:Q96RK1"/>
<dbReference type="Proteomes" id="UP000005640">
    <property type="component" value="Chromosome 1"/>
</dbReference>
<dbReference type="RNAct" id="Q96RK1">
    <property type="molecule type" value="protein"/>
</dbReference>
<dbReference type="Bgee" id="ENSG00000179862">
    <property type="expression patterns" value="Expressed in olfactory segment of nasal mucosa and 129 other cell types or tissues"/>
</dbReference>
<dbReference type="GO" id="GO:0005737">
    <property type="term" value="C:cytoplasm"/>
    <property type="evidence" value="ECO:0007669"/>
    <property type="project" value="UniProtKB-SubCell"/>
</dbReference>
<dbReference type="GO" id="GO:0005654">
    <property type="term" value="C:nucleoplasm"/>
    <property type="evidence" value="ECO:0000304"/>
    <property type="project" value="Reactome"/>
</dbReference>
<dbReference type="GO" id="GO:0005634">
    <property type="term" value="C:nucleus"/>
    <property type="evidence" value="ECO:0000318"/>
    <property type="project" value="GO_Central"/>
</dbReference>
<dbReference type="GO" id="GO:0003713">
    <property type="term" value="F:transcription coactivator activity"/>
    <property type="evidence" value="ECO:0000250"/>
    <property type="project" value="UniProtKB"/>
</dbReference>
<dbReference type="GO" id="GO:0043627">
    <property type="term" value="P:response to estrogen"/>
    <property type="evidence" value="ECO:0000250"/>
    <property type="project" value="UniProtKB"/>
</dbReference>
<dbReference type="FunFam" id="6.10.140.2200:FF:000002">
    <property type="entry name" value="cbp/p300-interacting transactivator 1 isoform X2"/>
    <property type="match status" value="1"/>
</dbReference>
<dbReference type="Gene3D" id="6.10.140.2200">
    <property type="match status" value="1"/>
</dbReference>
<dbReference type="InterPro" id="IPR007576">
    <property type="entry name" value="CITED"/>
</dbReference>
<dbReference type="PANTHER" id="PTHR17045:SF5">
    <property type="entry name" value="CBP_P300-INTERACTING TRANSACTIVATOR 4"/>
    <property type="match status" value="1"/>
</dbReference>
<dbReference type="PANTHER" id="PTHR17045">
    <property type="entry name" value="MELANOCYTE SPECIFIC GENE RELATED CITED"/>
    <property type="match status" value="1"/>
</dbReference>
<dbReference type="Pfam" id="PF04487">
    <property type="entry name" value="CITED"/>
    <property type="match status" value="1"/>
</dbReference>
<protein>
    <recommendedName>
        <fullName>Cbp/p300-interacting transactivator 4</fullName>
    </recommendedName>
    <alternativeName>
        <fullName>MSG1-related protein 2</fullName>
        <shortName>MRG-2</shortName>
    </alternativeName>
</protein>
<keyword id="KW-0010">Activator</keyword>
<keyword id="KW-0963">Cytoplasm</keyword>
<keyword id="KW-0539">Nucleus</keyword>
<keyword id="KW-1267">Proteomics identification</keyword>
<keyword id="KW-1185">Reference proteome</keyword>
<keyword id="KW-0804">Transcription</keyword>
<keyword id="KW-0805">Transcription regulation</keyword>
<reference evidence="7" key="1">
    <citation type="submission" date="2001-03" db="EMBL/GenBank/DDBJ databases">
        <title>Structural and functional conservation of MRG family in system evolution.</title>
        <authorList>
            <person name="Zhuang D.Z."/>
            <person name="Chou Y.-T."/>
            <person name="Yang Y.-C."/>
        </authorList>
    </citation>
    <scope>NUCLEOTIDE SEQUENCE [GENOMIC DNA]</scope>
</reference>
<reference evidence="5 8" key="2">
    <citation type="journal article" date="2002" name="J. Biol. Chem.">
        <title>Human CREB-binding protein/p300-interacting transactivator with ED-rich tail (CITED) 4, a new member of the CITED family, functions as a co-activator for transcription factor AP-2.</title>
        <authorList>
            <person name="Braganca J."/>
            <person name="Swingler T."/>
            <person name="Marques F.I.R."/>
            <person name="Jones T."/>
            <person name="Eloranta J.J."/>
            <person name="Hurst H.C."/>
            <person name="Shioda T."/>
            <person name="Bhattacharya S."/>
        </authorList>
    </citation>
    <scope>NUCLEOTIDE SEQUENCE [GENOMIC DNA]</scope>
    <scope>FUNCTION</scope>
    <scope>INTERACTION WITH CREBBP; EP300 AND TFAP2</scope>
    <scope>SUBCELLULAR LOCATION</scope>
    <scope>TISSUE SPECIFICITY</scope>
</reference>
<reference evidence="6" key="3">
    <citation type="journal article" date="2004" name="Genome Res.">
        <title>The status, quality, and expansion of the NIH full-length cDNA project: the Mammalian Gene Collection (MGC).</title>
        <authorList>
            <consortium name="The MGC Project Team"/>
        </authorList>
    </citation>
    <scope>NUCLEOTIDE SEQUENCE [LARGE SCALE MRNA]</scope>
    <source>
        <tissue evidence="6">Pancreas</tissue>
    </source>
</reference>
<reference evidence="5" key="4">
    <citation type="journal article" date="2004" name="Cancer Res.">
        <title>CITED4 inhibits hypoxia-activated transcription in cancer cells, and its cytoplasmic location in breast cancer is associated with elevated expression of tumor cell hypoxia-inducible factor 1alpha.</title>
        <authorList>
            <person name="Fox S.B."/>
            <person name="Braganca J."/>
            <person name="Turley H."/>
            <person name="Campo L."/>
            <person name="Han C."/>
            <person name="Gatter K.C."/>
            <person name="Bhattacharya S."/>
            <person name="Harris A.L."/>
        </authorList>
    </citation>
    <scope>FUNCTION</scope>
    <scope>SUBCELLULAR LOCATION</scope>
    <scope>TISSUE SPECIFICITY</scope>
</reference>
<comment type="function">
    <text evidence="3 4">Acts as a transcriptional coactivator for TFAP2/AP-2. Enhances estrogen-dependent transactivation mediated by estrogen receptors. May function as an inhibitor of transactivation by HIF1A by disrupting HIF1A interaction with CREBBP. May be involved in regulation of gene expression during development and differentiation of blood cells, endothelial cells and mammary epithelial cells.</text>
</comment>
<comment type="subunit">
    <text evidence="3">Interacts via its C-terminal region with the CH1 domain of CREBBP and EP300. Interacts with all TFAP2/AP-2 isoforms.</text>
</comment>
<comment type="subcellular location">
    <subcellularLocation>
        <location evidence="3 4">Nucleus</location>
    </subcellularLocation>
    <subcellularLocation>
        <location evidence="3 4">Cytoplasm</location>
    </subcellularLocation>
</comment>
<comment type="tissue specificity">
    <text evidence="3 4">Expressed in most tissues examined with highest levels of expression in heart, liver, skeletal muscle and pancreas. Also expressed in bladder cell line ECV-304 and in various breast cancer cell lines. Also detected in both in situ and invasive breast tumors where its expression is down-regulated and mostly restricted to the cytoplasm of malignant epithelium. Down-regulation of expression is associated with elevated levels of HIF1A and increased tumor growth and angiogenesis.</text>
</comment>
<comment type="similarity">
    <text evidence="1">Belongs to the CITED family.</text>
</comment>
<comment type="online information" name="Atlas of Genetics and Cytogenetics in Oncology and Haematology">
    <link uri="https://atlasgeneticsoncology.org/gene/44535/CITED4"/>
</comment>
<accession>Q96RK1</accession>
<sequence length="184" mass="18569">MADHLMLAEGYRLVQRPPSAAAAHGPHALRTLPPYAGPGLDSGLRPRGAPLGPPPPRQPGALAYGAFGPPSSFQPFPAVPPPAAGIAHLQPVATPYPGRAAAPPNAPGGPPGPQPAPSAAAPPPPAHALGGMDAELIDEEALTSLELELGLHRVRELPELFLGQSEFDCFSDLGSAPPAGSVSC</sequence>
<feature type="chain" id="PRO_0000233309" description="Cbp/p300-interacting transactivator 4">
    <location>
        <begin position="1"/>
        <end position="184"/>
    </location>
</feature>
<feature type="region of interest" description="Disordered" evidence="2">
    <location>
        <begin position="18"/>
        <end position="67"/>
    </location>
</feature>
<feature type="region of interest" description="Disordered" evidence="2">
    <location>
        <begin position="94"/>
        <end position="128"/>
    </location>
</feature>
<feature type="compositionally biased region" description="Low complexity" evidence="2">
    <location>
        <begin position="18"/>
        <end position="28"/>
    </location>
</feature>
<feature type="compositionally biased region" description="Pro residues" evidence="2">
    <location>
        <begin position="104"/>
        <end position="126"/>
    </location>
</feature>
<proteinExistence type="evidence at protein level"/>
<gene>
    <name evidence="9" type="primary">CITED4</name>
    <name type="synonym">MRG2</name>
</gene>